<name>TRPB_HISS2</name>
<comment type="function">
    <text evidence="1">The beta subunit is responsible for the synthesis of L-tryptophan from indole and L-serine.</text>
</comment>
<comment type="catalytic activity">
    <reaction evidence="1">
        <text>(1S,2R)-1-C-(indol-3-yl)glycerol 3-phosphate + L-serine = D-glyceraldehyde 3-phosphate + L-tryptophan + H2O</text>
        <dbReference type="Rhea" id="RHEA:10532"/>
        <dbReference type="ChEBI" id="CHEBI:15377"/>
        <dbReference type="ChEBI" id="CHEBI:33384"/>
        <dbReference type="ChEBI" id="CHEBI:57912"/>
        <dbReference type="ChEBI" id="CHEBI:58866"/>
        <dbReference type="ChEBI" id="CHEBI:59776"/>
        <dbReference type="EC" id="4.2.1.20"/>
    </reaction>
</comment>
<comment type="cofactor">
    <cofactor evidence="1">
        <name>pyridoxal 5'-phosphate</name>
        <dbReference type="ChEBI" id="CHEBI:597326"/>
    </cofactor>
</comment>
<comment type="pathway">
    <text evidence="1">Amino-acid biosynthesis; L-tryptophan biosynthesis; L-tryptophan from chorismate: step 5/5.</text>
</comment>
<comment type="subunit">
    <text evidence="1">Tetramer of two alpha and two beta chains.</text>
</comment>
<comment type="similarity">
    <text evidence="1">Belongs to the TrpB family.</text>
</comment>
<organism>
    <name type="scientific">Histophilus somni (strain 2336)</name>
    <name type="common">Haemophilus somnus</name>
    <dbReference type="NCBI Taxonomy" id="228400"/>
    <lineage>
        <taxon>Bacteria</taxon>
        <taxon>Pseudomonadati</taxon>
        <taxon>Pseudomonadota</taxon>
        <taxon>Gammaproteobacteria</taxon>
        <taxon>Pasteurellales</taxon>
        <taxon>Pasteurellaceae</taxon>
        <taxon>Histophilus</taxon>
    </lineage>
</organism>
<dbReference type="EC" id="4.2.1.20" evidence="1"/>
<dbReference type="EMBL" id="CP000947">
    <property type="protein sequence ID" value="ACA31045.1"/>
    <property type="molecule type" value="Genomic_DNA"/>
</dbReference>
<dbReference type="RefSeq" id="WP_012340469.1">
    <property type="nucleotide sequence ID" value="NC_010519.1"/>
</dbReference>
<dbReference type="SMR" id="B0UU34"/>
<dbReference type="STRING" id="228400.HSM_1311"/>
<dbReference type="GeneID" id="31487614"/>
<dbReference type="KEGG" id="hsm:HSM_1311"/>
<dbReference type="HOGENOM" id="CLU_016734_3_1_6"/>
<dbReference type="UniPathway" id="UPA00035">
    <property type="reaction ID" value="UER00044"/>
</dbReference>
<dbReference type="GO" id="GO:0005737">
    <property type="term" value="C:cytoplasm"/>
    <property type="evidence" value="ECO:0007669"/>
    <property type="project" value="TreeGrafter"/>
</dbReference>
<dbReference type="GO" id="GO:0004834">
    <property type="term" value="F:tryptophan synthase activity"/>
    <property type="evidence" value="ECO:0007669"/>
    <property type="project" value="UniProtKB-UniRule"/>
</dbReference>
<dbReference type="CDD" id="cd06446">
    <property type="entry name" value="Trp-synth_B"/>
    <property type="match status" value="1"/>
</dbReference>
<dbReference type="FunFam" id="3.40.50.1100:FF:000001">
    <property type="entry name" value="Tryptophan synthase beta chain"/>
    <property type="match status" value="1"/>
</dbReference>
<dbReference type="FunFam" id="3.40.50.1100:FF:000004">
    <property type="entry name" value="Tryptophan synthase beta chain"/>
    <property type="match status" value="1"/>
</dbReference>
<dbReference type="Gene3D" id="3.40.50.1100">
    <property type="match status" value="2"/>
</dbReference>
<dbReference type="HAMAP" id="MF_00133">
    <property type="entry name" value="Trp_synth_beta"/>
    <property type="match status" value="1"/>
</dbReference>
<dbReference type="InterPro" id="IPR006653">
    <property type="entry name" value="Trp_synth_b_CS"/>
</dbReference>
<dbReference type="InterPro" id="IPR006654">
    <property type="entry name" value="Trp_synth_beta"/>
</dbReference>
<dbReference type="InterPro" id="IPR023026">
    <property type="entry name" value="Trp_synth_beta/beta-like"/>
</dbReference>
<dbReference type="InterPro" id="IPR001926">
    <property type="entry name" value="TrpB-like_PALP"/>
</dbReference>
<dbReference type="InterPro" id="IPR036052">
    <property type="entry name" value="TrpB-like_PALP_sf"/>
</dbReference>
<dbReference type="NCBIfam" id="TIGR00263">
    <property type="entry name" value="trpB"/>
    <property type="match status" value="1"/>
</dbReference>
<dbReference type="PANTHER" id="PTHR48077:SF3">
    <property type="entry name" value="TRYPTOPHAN SYNTHASE"/>
    <property type="match status" value="1"/>
</dbReference>
<dbReference type="PANTHER" id="PTHR48077">
    <property type="entry name" value="TRYPTOPHAN SYNTHASE-RELATED"/>
    <property type="match status" value="1"/>
</dbReference>
<dbReference type="Pfam" id="PF00291">
    <property type="entry name" value="PALP"/>
    <property type="match status" value="1"/>
</dbReference>
<dbReference type="PIRSF" id="PIRSF001413">
    <property type="entry name" value="Trp_syn_beta"/>
    <property type="match status" value="1"/>
</dbReference>
<dbReference type="SUPFAM" id="SSF53686">
    <property type="entry name" value="Tryptophan synthase beta subunit-like PLP-dependent enzymes"/>
    <property type="match status" value="1"/>
</dbReference>
<dbReference type="PROSITE" id="PS00168">
    <property type="entry name" value="TRP_SYNTHASE_BETA"/>
    <property type="match status" value="1"/>
</dbReference>
<reference key="1">
    <citation type="submission" date="2008-02" db="EMBL/GenBank/DDBJ databases">
        <title>Complete sequence of Haemophilus somnus 2336.</title>
        <authorList>
            <consortium name="US DOE Joint Genome Institute"/>
            <person name="Siddaramappa S."/>
            <person name="Duncan A.J."/>
            <person name="Challacombe J.F."/>
            <person name="Rainey D."/>
            <person name="Gillaspy A.F."/>
            <person name="Carson M."/>
            <person name="Gipson J."/>
            <person name="Gipson M."/>
            <person name="Bruce D."/>
            <person name="Detter J.C."/>
            <person name="Han C.S."/>
            <person name="Land M."/>
            <person name="Tapia R."/>
            <person name="Thompson L.S."/>
            <person name="Orvis J."/>
            <person name="Zaitshik J."/>
            <person name="Barnes G."/>
            <person name="Brettin T.S."/>
            <person name="Dyer D.W."/>
            <person name="Inzana T.J."/>
        </authorList>
    </citation>
    <scope>NUCLEOTIDE SEQUENCE [LARGE SCALE GENOMIC DNA]</scope>
    <source>
        <strain>2336</strain>
    </source>
</reference>
<gene>
    <name evidence="1" type="primary">trpB</name>
    <name type="ordered locus">HSM_1311</name>
</gene>
<proteinExistence type="inferred from homology"/>
<sequence>MMGTILNPYFGEFGGMYVPEILVPVLKQLEKAFVEAQHDPVFQQEFQDLLKNYAGRPTALTLCRNLTKGTKTKLYLKREDLLHGGAHKTNQVLGQILLAKRMGKTRIIAETGAGQHGVATALACAMLDMPCRVYMGAKDVERQSPNVFRMRLMGAEVIPVEKGSCSLKDACCEAMRDWSANYETTHYLLGTAAGPHPFPTIVREFQKMIGEETKCQILAKENRLPDAVIAAVGGGSNAIGMFAEFIAEKSVQLIGIEPAGNGIHTGKHGAPLRHGSIGIYFGMKSPIMQTQDGQIEESYSISAGLDFPSVGPEHAYLHTIGRAQYESITDDEAIEAFQALAKHEGIIPALESSHALAYALKLIVQNPEKEQLLVVNLSGRGDKDIFTVDKILTEKGII</sequence>
<protein>
    <recommendedName>
        <fullName evidence="1">Tryptophan synthase beta chain</fullName>
        <ecNumber evidence="1">4.2.1.20</ecNumber>
    </recommendedName>
</protein>
<accession>B0UU34</accession>
<evidence type="ECO:0000255" key="1">
    <source>
        <dbReference type="HAMAP-Rule" id="MF_00133"/>
    </source>
</evidence>
<keyword id="KW-0028">Amino-acid biosynthesis</keyword>
<keyword id="KW-0057">Aromatic amino acid biosynthesis</keyword>
<keyword id="KW-0456">Lyase</keyword>
<keyword id="KW-0663">Pyridoxal phosphate</keyword>
<keyword id="KW-0822">Tryptophan biosynthesis</keyword>
<feature type="chain" id="PRO_1000076391" description="Tryptophan synthase beta chain">
    <location>
        <begin position="1"/>
        <end position="398"/>
    </location>
</feature>
<feature type="modified residue" description="N6-(pyridoxal phosphate)lysine" evidence="1">
    <location>
        <position position="88"/>
    </location>
</feature>